<dbReference type="EMBL" id="CU329671">
    <property type="protein sequence ID" value="CAA19328.1"/>
    <property type="molecule type" value="Genomic_DNA"/>
</dbReference>
<dbReference type="PIR" id="T39456">
    <property type="entry name" value="T39456"/>
</dbReference>
<dbReference type="RefSeq" id="NP_596736.1">
    <property type="nucleotide sequence ID" value="NM_001022662.2"/>
</dbReference>
<dbReference type="SMR" id="O60106"/>
<dbReference type="BioGRID" id="276302">
    <property type="interactions" value="7"/>
</dbReference>
<dbReference type="STRING" id="284812.O60106"/>
<dbReference type="iPTMnet" id="O60106"/>
<dbReference type="PaxDb" id="4896-SPBC14F5.10c.1"/>
<dbReference type="EnsemblFungi" id="SPBC14F5.10c.1">
    <property type="protein sequence ID" value="SPBC14F5.10c.1:pep"/>
    <property type="gene ID" value="SPBC14F5.10c"/>
</dbReference>
<dbReference type="KEGG" id="spo:2539750"/>
<dbReference type="PomBase" id="SPBC14F5.10c"/>
<dbReference type="VEuPathDB" id="FungiDB:SPBC14F5.10c"/>
<dbReference type="eggNOG" id="KOG4159">
    <property type="taxonomic scope" value="Eukaryota"/>
</dbReference>
<dbReference type="HOGENOM" id="CLU_013989_3_0_1"/>
<dbReference type="InParanoid" id="O60106"/>
<dbReference type="OMA" id="PWWFASV"/>
<dbReference type="PhylomeDB" id="O60106"/>
<dbReference type="Reactome" id="R-SPO-983168">
    <property type="pathway name" value="Antigen processing: Ubiquitination &amp; Proteasome degradation"/>
</dbReference>
<dbReference type="PRO" id="PR:O60106"/>
<dbReference type="Proteomes" id="UP000002485">
    <property type="component" value="Chromosome II"/>
</dbReference>
<dbReference type="GO" id="GO:0005829">
    <property type="term" value="C:cytosol"/>
    <property type="evidence" value="ECO:0000250"/>
    <property type="project" value="PomBase"/>
</dbReference>
<dbReference type="GO" id="GO:0061630">
    <property type="term" value="F:ubiquitin protein ligase activity"/>
    <property type="evidence" value="ECO:0000255"/>
    <property type="project" value="PomBase"/>
</dbReference>
<dbReference type="GO" id="GO:0008270">
    <property type="term" value="F:zinc ion binding"/>
    <property type="evidence" value="ECO:0000255"/>
    <property type="project" value="PomBase"/>
</dbReference>
<dbReference type="CDD" id="cd16514">
    <property type="entry name" value="RING-HC_LONFs_rpt2"/>
    <property type="match status" value="1"/>
</dbReference>
<dbReference type="Gene3D" id="2.30.130.40">
    <property type="entry name" value="LON domain-like"/>
    <property type="match status" value="1"/>
</dbReference>
<dbReference type="Gene3D" id="3.30.40.10">
    <property type="entry name" value="Zinc/RING finger domain, C3HC4 (zinc finger)"/>
    <property type="match status" value="2"/>
</dbReference>
<dbReference type="InterPro" id="IPR003111">
    <property type="entry name" value="Lon_prtase_N"/>
</dbReference>
<dbReference type="InterPro" id="IPR046336">
    <property type="entry name" value="Lon_prtase_N_sf"/>
</dbReference>
<dbReference type="InterPro" id="IPR015947">
    <property type="entry name" value="PUA-like_sf"/>
</dbReference>
<dbReference type="InterPro" id="IPR001841">
    <property type="entry name" value="Znf_RING"/>
</dbReference>
<dbReference type="InterPro" id="IPR013083">
    <property type="entry name" value="Znf_RING/FYVE/PHD"/>
</dbReference>
<dbReference type="InterPro" id="IPR017907">
    <property type="entry name" value="Znf_RING_CS"/>
</dbReference>
<dbReference type="PANTHER" id="PTHR23327:SF42">
    <property type="entry name" value="LON PEPTIDASE N-TERMINAL DOMAIN AND RING FINGER PROTEIN C14F5.10C"/>
    <property type="match status" value="1"/>
</dbReference>
<dbReference type="PANTHER" id="PTHR23327">
    <property type="entry name" value="RING FINGER PROTEIN 127"/>
    <property type="match status" value="1"/>
</dbReference>
<dbReference type="Pfam" id="PF02190">
    <property type="entry name" value="LON_substr_bdg"/>
    <property type="match status" value="1"/>
</dbReference>
<dbReference type="Pfam" id="PF13923">
    <property type="entry name" value="zf-C3HC4_2"/>
    <property type="match status" value="1"/>
</dbReference>
<dbReference type="SMART" id="SM00464">
    <property type="entry name" value="LON"/>
    <property type="match status" value="1"/>
</dbReference>
<dbReference type="SMART" id="SM00184">
    <property type="entry name" value="RING"/>
    <property type="match status" value="2"/>
</dbReference>
<dbReference type="SUPFAM" id="SSF88697">
    <property type="entry name" value="PUA domain-like"/>
    <property type="match status" value="1"/>
</dbReference>
<dbReference type="SUPFAM" id="SSF57850">
    <property type="entry name" value="RING/U-box"/>
    <property type="match status" value="2"/>
</dbReference>
<dbReference type="PROSITE" id="PS51787">
    <property type="entry name" value="LON_N"/>
    <property type="match status" value="1"/>
</dbReference>
<dbReference type="PROSITE" id="PS00518">
    <property type="entry name" value="ZF_RING_1"/>
    <property type="match status" value="1"/>
</dbReference>
<dbReference type="PROSITE" id="PS50089">
    <property type="entry name" value="ZF_RING_2"/>
    <property type="match status" value="1"/>
</dbReference>
<reference key="1">
    <citation type="journal article" date="2002" name="Nature">
        <title>The genome sequence of Schizosaccharomyces pombe.</title>
        <authorList>
            <person name="Wood V."/>
            <person name="Gwilliam R."/>
            <person name="Rajandream M.A."/>
            <person name="Lyne M.H."/>
            <person name="Lyne R."/>
            <person name="Stewart A."/>
            <person name="Sgouros J.G."/>
            <person name="Peat N."/>
            <person name="Hayles J."/>
            <person name="Baker S.G."/>
            <person name="Basham D."/>
            <person name="Bowman S."/>
            <person name="Brooks K."/>
            <person name="Brown D."/>
            <person name="Brown S."/>
            <person name="Chillingworth T."/>
            <person name="Churcher C.M."/>
            <person name="Collins M."/>
            <person name="Connor R."/>
            <person name="Cronin A."/>
            <person name="Davis P."/>
            <person name="Feltwell T."/>
            <person name="Fraser A."/>
            <person name="Gentles S."/>
            <person name="Goble A."/>
            <person name="Hamlin N."/>
            <person name="Harris D.E."/>
            <person name="Hidalgo J."/>
            <person name="Hodgson G."/>
            <person name="Holroyd S."/>
            <person name="Hornsby T."/>
            <person name="Howarth S."/>
            <person name="Huckle E.J."/>
            <person name="Hunt S."/>
            <person name="Jagels K."/>
            <person name="James K.D."/>
            <person name="Jones L."/>
            <person name="Jones M."/>
            <person name="Leather S."/>
            <person name="McDonald S."/>
            <person name="McLean J."/>
            <person name="Mooney P."/>
            <person name="Moule S."/>
            <person name="Mungall K.L."/>
            <person name="Murphy L.D."/>
            <person name="Niblett D."/>
            <person name="Odell C."/>
            <person name="Oliver K."/>
            <person name="O'Neil S."/>
            <person name="Pearson D."/>
            <person name="Quail M.A."/>
            <person name="Rabbinowitsch E."/>
            <person name="Rutherford K.M."/>
            <person name="Rutter S."/>
            <person name="Saunders D."/>
            <person name="Seeger K."/>
            <person name="Sharp S."/>
            <person name="Skelton J."/>
            <person name="Simmonds M.N."/>
            <person name="Squares R."/>
            <person name="Squares S."/>
            <person name="Stevens K."/>
            <person name="Taylor K."/>
            <person name="Taylor R.G."/>
            <person name="Tivey A."/>
            <person name="Walsh S.V."/>
            <person name="Warren T."/>
            <person name="Whitehead S."/>
            <person name="Woodward J.R."/>
            <person name="Volckaert G."/>
            <person name="Aert R."/>
            <person name="Robben J."/>
            <person name="Grymonprez B."/>
            <person name="Weltjens I."/>
            <person name="Vanstreels E."/>
            <person name="Rieger M."/>
            <person name="Schaefer M."/>
            <person name="Mueller-Auer S."/>
            <person name="Gabel C."/>
            <person name="Fuchs M."/>
            <person name="Duesterhoeft A."/>
            <person name="Fritzc C."/>
            <person name="Holzer E."/>
            <person name="Moestl D."/>
            <person name="Hilbert H."/>
            <person name="Borzym K."/>
            <person name="Langer I."/>
            <person name="Beck A."/>
            <person name="Lehrach H."/>
            <person name="Reinhardt R."/>
            <person name="Pohl T.M."/>
            <person name="Eger P."/>
            <person name="Zimmermann W."/>
            <person name="Wedler H."/>
            <person name="Wambutt R."/>
            <person name="Purnelle B."/>
            <person name="Goffeau A."/>
            <person name="Cadieu E."/>
            <person name="Dreano S."/>
            <person name="Gloux S."/>
            <person name="Lelaure V."/>
            <person name="Mottier S."/>
            <person name="Galibert F."/>
            <person name="Aves S.J."/>
            <person name="Xiang Z."/>
            <person name="Hunt C."/>
            <person name="Moore K."/>
            <person name="Hurst S.M."/>
            <person name="Lucas M."/>
            <person name="Rochet M."/>
            <person name="Gaillardin C."/>
            <person name="Tallada V.A."/>
            <person name="Garzon A."/>
            <person name="Thode G."/>
            <person name="Daga R.R."/>
            <person name="Cruzado L."/>
            <person name="Jimenez J."/>
            <person name="Sanchez M."/>
            <person name="del Rey F."/>
            <person name="Benito J."/>
            <person name="Dominguez A."/>
            <person name="Revuelta J.L."/>
            <person name="Moreno S."/>
            <person name="Armstrong J."/>
            <person name="Forsburg S.L."/>
            <person name="Cerutti L."/>
            <person name="Lowe T."/>
            <person name="McCombie W.R."/>
            <person name="Paulsen I."/>
            <person name="Potashkin J."/>
            <person name="Shpakovski G.V."/>
            <person name="Ussery D."/>
            <person name="Barrell B.G."/>
            <person name="Nurse P."/>
        </authorList>
    </citation>
    <scope>NUCLEOTIDE SEQUENCE [LARGE SCALE GENOMIC DNA]</scope>
    <source>
        <strain>972 / ATCC 24843</strain>
    </source>
</reference>
<accession>O60106</accession>
<sequence length="486" mass="56143">MRKERPGVLFNKIRSYFICPGCNCLPDWPVTLPCGGTVCRKCFRNAYSSESSGKVSPSRCCFYNHKKPHYSVETEVKDVIISKVVELIKTTEFQISQQSLVPLELKEEICHDDCLSSSPPCTSALTEITLLPPTFHNLIPSSSSYETAVAEFLHMEDLLQENVSRELECQICFGMLYDPVVSPCGHTFCGPCLMQALTQSPQCPTCRFGLPSPVVLEHAKSHSITTFLRDFYPDNWLERQKSWEEEKEQESWLPLFISMLAYPRMPTFLHIFELRYHIMIKKCLETSKRFCIAMPLRARSDGHNEHRELRNARGQRLFCSEYGTILEIIQVEPLIDGRSLVEARGSYCVRIIDFRADGLFPRVKIEKHYDTPLRATPLQFPEPEYLLMYGNLSNEELVERIDAFYMNARRTYVHWVVPLIDIKMEARQSIADLSYKITNLLPISELEKTRILQVDNPTDRLVLVLIWLTQLQESWWYRVGSACTIA</sequence>
<feature type="chain" id="PRO_0000310493" description="LON peptidase N-terminal domain and RING finger protein C14F5.10c">
    <location>
        <begin position="1"/>
        <end position="486"/>
    </location>
</feature>
<feature type="domain" description="Lon N-terminal" evidence="2">
    <location>
        <begin position="250"/>
        <end position="472"/>
    </location>
</feature>
<feature type="zinc finger region" description="RING-type" evidence="1">
    <location>
        <begin position="169"/>
        <end position="207"/>
    </location>
</feature>
<proteinExistence type="predicted"/>
<protein>
    <recommendedName>
        <fullName>LON peptidase N-terminal domain and RING finger protein C14F5.10c</fullName>
    </recommendedName>
</protein>
<organism>
    <name type="scientific">Schizosaccharomyces pombe (strain 972 / ATCC 24843)</name>
    <name type="common">Fission yeast</name>
    <dbReference type="NCBI Taxonomy" id="284812"/>
    <lineage>
        <taxon>Eukaryota</taxon>
        <taxon>Fungi</taxon>
        <taxon>Dikarya</taxon>
        <taxon>Ascomycota</taxon>
        <taxon>Taphrinomycotina</taxon>
        <taxon>Schizosaccharomycetes</taxon>
        <taxon>Schizosaccharomycetales</taxon>
        <taxon>Schizosaccharomycetaceae</taxon>
        <taxon>Schizosaccharomyces</taxon>
    </lineage>
</organism>
<name>YOXA_SCHPO</name>
<keyword id="KW-0479">Metal-binding</keyword>
<keyword id="KW-1185">Reference proteome</keyword>
<keyword id="KW-0862">Zinc</keyword>
<keyword id="KW-0863">Zinc-finger</keyword>
<evidence type="ECO:0000255" key="1">
    <source>
        <dbReference type="PROSITE-ProRule" id="PRU00175"/>
    </source>
</evidence>
<evidence type="ECO:0000255" key="2">
    <source>
        <dbReference type="PROSITE-ProRule" id="PRU01123"/>
    </source>
</evidence>
<gene>
    <name type="ORF">SPBC14F5.10c</name>
</gene>